<feature type="signal peptide" evidence="4">
    <location>
        <begin position="1"/>
        <end position="29"/>
    </location>
</feature>
<feature type="propeptide" id="PRO_0000444690" evidence="4">
    <location>
        <begin position="30"/>
        <end position="35"/>
    </location>
</feature>
<feature type="chain" id="PRO_5002412104" description="Conotoxin phi-MiXXVIIB" evidence="4">
    <location>
        <begin position="36"/>
        <end position="68"/>
    </location>
</feature>
<feature type="modified residue" description="4-hydroxyproline" evidence="4">
    <location>
        <position position="44"/>
    </location>
</feature>
<feature type="disulfide bond" evidence="1">
    <location>
        <begin position="38"/>
        <end position="49"/>
    </location>
</feature>
<feature type="disulfide bond" evidence="1">
    <location>
        <begin position="42"/>
        <end position="51"/>
    </location>
</feature>
<feature type="disulfide bond" evidence="1">
    <location>
        <begin position="45"/>
        <end position="56"/>
    </location>
</feature>
<feature type="disulfide bond" evidence="1">
    <location>
        <begin position="50"/>
        <end position="61"/>
    </location>
</feature>
<accession>A0A0E3SVB8</accession>
<proteinExistence type="evidence at protein level"/>
<keyword id="KW-1015">Disulfide bond</keyword>
<keyword id="KW-0379">Hydroxylation</keyword>
<keyword id="KW-0964">Secreted</keyword>
<keyword id="KW-0732">Signal</keyword>
<evidence type="ECO:0000250" key="1">
    <source>
        <dbReference type="UniProtKB" id="A0A0E3SVE7"/>
    </source>
</evidence>
<evidence type="ECO:0000303" key="2">
    <source>
    </source>
</evidence>
<evidence type="ECO:0000305" key="3"/>
<evidence type="ECO:0000305" key="4">
    <source>
    </source>
</evidence>
<organism>
    <name type="scientific">Conus miles</name>
    <name type="common">Soldier cone</name>
    <name type="synonym">Mile cone</name>
    <dbReference type="NCBI Taxonomy" id="69564"/>
    <lineage>
        <taxon>Eukaryota</taxon>
        <taxon>Metazoa</taxon>
        <taxon>Spiralia</taxon>
        <taxon>Lophotrochozoa</taxon>
        <taxon>Mollusca</taxon>
        <taxon>Gastropoda</taxon>
        <taxon>Caenogastropoda</taxon>
        <taxon>Neogastropoda</taxon>
        <taxon>Conoidea</taxon>
        <taxon>Conidae</taxon>
        <taxon>Conus</taxon>
        <taxon>Rhizoconus</taxon>
    </lineage>
</organism>
<name>CG2RB_CONMI</name>
<protein>
    <recommendedName>
        <fullName evidence="3">Conotoxin phi-MiXXVIIB</fullName>
    </recommendedName>
    <alternativeName>
        <fullName evidence="2">Conopeptide Mi046</fullName>
    </alternativeName>
    <alternativeName>
        <fullName evidence="3">Mi27.2</fullName>
    </alternativeName>
</protein>
<sequence>MRFFFLLLTVALFLTSITGDDAERMLGMKEGGYVREDCGSDCAPCGGECCCEPNSCIDGTCHHESSPN</sequence>
<dbReference type="EMBL" id="KP216861">
    <property type="protein sequence ID" value="AKB91384.1"/>
    <property type="molecule type" value="mRNA"/>
</dbReference>
<dbReference type="SMR" id="A0A0E3SVB8"/>
<dbReference type="GO" id="GO:0005576">
    <property type="term" value="C:extracellular region"/>
    <property type="evidence" value="ECO:0007669"/>
    <property type="project" value="UniProtKB-SubCell"/>
</dbReference>
<comment type="function">
    <text evidence="1">This peptide promotes cell proliferation (EC(50)=17.85 uM) and inhibits apoptosis (EC(50)=2.2 uM).</text>
</comment>
<comment type="subcellular location">
    <subcellularLocation>
        <location evidence="4">Secreted</location>
    </subcellularLocation>
</comment>
<comment type="tissue specificity">
    <text evidence="4">Expressed by the venom duct.</text>
</comment>
<comment type="domain">
    <text evidence="1">Displays a mini-granulin fold, a structure composed of two short, stacked beta-hairpins connected by two parallel disulfide bonds. This newly described fold is derived from the same cysteine connectivity as knottins (ICK fold). The name 'mini-granulin fold' comes from the structural homology with the N-terminal region of the human granulin.</text>
</comment>
<comment type="domain">
    <text evidence="3">The cysteine framework is XXVII (C-C-C-CC-C-C).</text>
</comment>
<comment type="miscellaneous">
    <text evidence="1">Negative results: this peptide does not show activities on voltage-gated sodium (Nav) and calcium (Cav) channels as well as on nicotinic acetylcholine receptors (nAChRs) (at concentrations up to 100 uM).</text>
</comment>
<comment type="similarity">
    <text evidence="3">Belongs to the conotoxin G2 superfamily. 1 family.</text>
</comment>
<reference key="1">
    <citation type="journal article" date="2013" name="Mol. Cell. Proteomics">
        <title>Transcriptomic messiness in the venom duct of Conus miles contributes to conotoxin diversity.</title>
        <authorList>
            <person name="Jin A.H."/>
            <person name="Dutertre S."/>
            <person name="Kaas Q."/>
            <person name="Lavergne V."/>
            <person name="Kubala P."/>
            <person name="Lewis R.J."/>
            <person name="Alewood P.F."/>
        </authorList>
    </citation>
    <scope>NUCLEOTIDE SEQUENCE [MRNA]</scope>
    <scope>IDENTIFICATION BY MASS SPECTROMETRY</scope>
    <scope>HYDROXYLATION AT PRO-44</scope>
    <source>
        <tissue>Venom duct</tissue>
    </source>
</reference>